<keyword id="KW-0027">Amidation</keyword>
<keyword id="KW-0903">Direct protein sequencing</keyword>
<keyword id="KW-0372">Hormone</keyword>
<keyword id="KW-0873">Pyrrolidone carboxylic acid</keyword>
<keyword id="KW-0964">Secreted</keyword>
<evidence type="ECO:0000269" key="1">
    <source>
    </source>
</evidence>
<evidence type="ECO:0000305" key="2"/>
<protein>
    <recommendedName>
        <fullName>Gonadoliberin-2</fullName>
    </recommendedName>
    <alternativeName>
        <fullName>Gonadoliberin II</fullName>
    </alternativeName>
    <alternativeName>
        <fullName>Gonadotropin-releasing hormone II</fullName>
        <shortName>GnRH-II</shortName>
    </alternativeName>
    <alternativeName>
        <fullName>Luliberin II</fullName>
    </alternativeName>
    <alternativeName>
        <fullName>Luteinizing hormone-releasing hormone II</fullName>
        <shortName>LH-RH II</shortName>
    </alternativeName>
</protein>
<comment type="function">
    <text>Stimulates the secretion of gonadotropins.</text>
</comment>
<comment type="subcellular location">
    <subcellularLocation>
        <location>Secreted</location>
    </subcellularLocation>
</comment>
<comment type="similarity">
    <text evidence="2">Belongs to the GnRH family.</text>
</comment>
<accession>P68074</accession>
<accession>P20408</accession>
<accession>P37043</accession>
<accession>P81750</accession>
<sequence>QHWSHGWYPG</sequence>
<feature type="peptide" id="PRO_0000043953" description="Gonadoliberin-2">
    <location>
        <begin position="1"/>
        <end position="10"/>
    </location>
</feature>
<feature type="modified residue" description="Pyrrolidone carboxylic acid" evidence="1">
    <location>
        <position position="1"/>
    </location>
</feature>
<feature type="modified residue" description="Glycine amide" evidence="1">
    <location>
        <position position="10"/>
    </location>
</feature>
<organism>
    <name type="scientific">Squalus acanthias</name>
    <name type="common">Spiny dogfish</name>
    <dbReference type="NCBI Taxonomy" id="7797"/>
    <lineage>
        <taxon>Eukaryota</taxon>
        <taxon>Metazoa</taxon>
        <taxon>Chordata</taxon>
        <taxon>Craniata</taxon>
        <taxon>Vertebrata</taxon>
        <taxon>Chondrichthyes</taxon>
        <taxon>Elasmobranchii</taxon>
        <taxon>Squalomorphii</taxon>
        <taxon>Squaliformes</taxon>
        <taxon>Squalidae</taxon>
        <taxon>Squalus</taxon>
    </lineage>
</organism>
<name>GON2_SQUAC</name>
<gene>
    <name type="primary">gnrh2</name>
</gene>
<reference key="1">
    <citation type="journal article" date="1992" name="Proc. Natl. Acad. Sci. U.S.A.">
        <title>Distinct sequence of gonadotropin-releasing hormone (GnRH) in dogfish brain provides insight into GnRH evolution.</title>
        <authorList>
            <person name="Lovejoy D.A."/>
            <person name="Fischer W.H."/>
            <person name="Ngamvongchon S."/>
            <person name="Craig A.G."/>
            <person name="Nahorniak C.S."/>
            <person name="Peter R.E."/>
            <person name="Rivier J.E."/>
            <person name="Sherwood N.M."/>
        </authorList>
    </citation>
    <scope>PROTEIN SEQUENCE</scope>
    <scope>PYROGLUTAMATE FORMATION AT GLN-1</scope>
    <scope>AMIDATION AT GLY-10</scope>
    <source>
        <tissue>Brain</tissue>
    </source>
</reference>
<dbReference type="PIR" id="B46030">
    <property type="entry name" value="B46030"/>
</dbReference>
<dbReference type="GO" id="GO:0005576">
    <property type="term" value="C:extracellular region"/>
    <property type="evidence" value="ECO:0007669"/>
    <property type="project" value="UniProtKB-SubCell"/>
</dbReference>
<dbReference type="GO" id="GO:0005179">
    <property type="term" value="F:hormone activity"/>
    <property type="evidence" value="ECO:0007669"/>
    <property type="project" value="UniProtKB-KW"/>
</dbReference>
<dbReference type="InterPro" id="IPR002012">
    <property type="entry name" value="GnRH"/>
</dbReference>
<dbReference type="Pfam" id="PF00446">
    <property type="entry name" value="GnRH"/>
    <property type="match status" value="1"/>
</dbReference>
<dbReference type="PROSITE" id="PS00473">
    <property type="entry name" value="GNRH"/>
    <property type="match status" value="1"/>
</dbReference>
<proteinExistence type="evidence at protein level"/>